<reference key="1">
    <citation type="journal article" date="1990" name="EMBO J.">
        <title>Three tomato genes code for heat stress transcription factors with a region of remarkable homology to the DNA-binding domain of the yeast HSF.</title>
        <authorList>
            <person name="Scharf K.D."/>
            <person name="Rose S."/>
            <person name="Zott W."/>
            <person name="Schoef F."/>
            <person name="Nover L."/>
        </authorList>
    </citation>
    <scope>NUCLEOTIDE SEQUENCE [MRNA]</scope>
</reference>
<organism>
    <name type="scientific">Solanum peruvianum</name>
    <name type="common">Peruvian tomato</name>
    <name type="synonym">Lycopersicon peruvianum</name>
    <dbReference type="NCBI Taxonomy" id="4082"/>
    <lineage>
        <taxon>Eukaryota</taxon>
        <taxon>Viridiplantae</taxon>
        <taxon>Streptophyta</taxon>
        <taxon>Embryophyta</taxon>
        <taxon>Tracheophyta</taxon>
        <taxon>Spermatophyta</taxon>
        <taxon>Magnoliopsida</taxon>
        <taxon>eudicotyledons</taxon>
        <taxon>Gunneridae</taxon>
        <taxon>Pentapetalae</taxon>
        <taxon>asterids</taxon>
        <taxon>lamiids</taxon>
        <taxon>Solanales</taxon>
        <taxon>Solanaceae</taxon>
        <taxon>Solanoideae</taxon>
        <taxon>Solaneae</taxon>
        <taxon>Solanum</taxon>
        <taxon>Solanum subgen. Lycopersicon</taxon>
    </lineage>
</organism>
<keyword id="KW-0010">Activator</keyword>
<keyword id="KW-0238">DNA-binding</keyword>
<keyword id="KW-0539">Nucleus</keyword>
<keyword id="KW-0597">Phosphoprotein</keyword>
<keyword id="KW-0346">Stress response</keyword>
<keyword id="KW-0804">Transcription</keyword>
<keyword id="KW-0805">Transcription regulation</keyword>
<proteinExistence type="evidence at transcript level"/>
<evidence type="ECO:0000250" key="1"/>
<evidence type="ECO:0000256" key="2">
    <source>
        <dbReference type="SAM" id="MobiDB-lite"/>
    </source>
</evidence>
<evidence type="ECO:0000305" key="3"/>
<name>HSF24_SOLPE</name>
<dbReference type="EMBL" id="X55347">
    <property type="protein sequence ID" value="CAA39034.1"/>
    <property type="molecule type" value="mRNA"/>
</dbReference>
<dbReference type="PIR" id="S12361">
    <property type="entry name" value="S12361"/>
</dbReference>
<dbReference type="SMR" id="P22335"/>
<dbReference type="GO" id="GO:0005634">
    <property type="term" value="C:nucleus"/>
    <property type="evidence" value="ECO:0007669"/>
    <property type="project" value="UniProtKB-SubCell"/>
</dbReference>
<dbReference type="GO" id="GO:0003700">
    <property type="term" value="F:DNA-binding transcription factor activity"/>
    <property type="evidence" value="ECO:0007669"/>
    <property type="project" value="InterPro"/>
</dbReference>
<dbReference type="GO" id="GO:0000978">
    <property type="term" value="F:RNA polymerase II cis-regulatory region sequence-specific DNA binding"/>
    <property type="evidence" value="ECO:0007669"/>
    <property type="project" value="TreeGrafter"/>
</dbReference>
<dbReference type="GO" id="GO:0006357">
    <property type="term" value="P:regulation of transcription by RNA polymerase II"/>
    <property type="evidence" value="ECO:0007669"/>
    <property type="project" value="TreeGrafter"/>
</dbReference>
<dbReference type="FunFam" id="1.10.10.10:FF:000037">
    <property type="entry name" value="Heat stress transcription factor B-4"/>
    <property type="match status" value="1"/>
</dbReference>
<dbReference type="Gene3D" id="6.10.250.2730">
    <property type="match status" value="1"/>
</dbReference>
<dbReference type="Gene3D" id="1.10.10.10">
    <property type="entry name" value="Winged helix-like DNA-binding domain superfamily/Winged helix DNA-binding domain"/>
    <property type="match status" value="1"/>
</dbReference>
<dbReference type="InterPro" id="IPR000232">
    <property type="entry name" value="HSF_DNA-bd"/>
</dbReference>
<dbReference type="InterPro" id="IPR036388">
    <property type="entry name" value="WH-like_DNA-bd_sf"/>
</dbReference>
<dbReference type="InterPro" id="IPR036390">
    <property type="entry name" value="WH_DNA-bd_sf"/>
</dbReference>
<dbReference type="PANTHER" id="PTHR10015">
    <property type="entry name" value="HEAT SHOCK TRANSCRIPTION FACTOR"/>
    <property type="match status" value="1"/>
</dbReference>
<dbReference type="PANTHER" id="PTHR10015:SF329">
    <property type="entry name" value="HEAT STRESS TRANSCRIPTION FACTOR B-1"/>
    <property type="match status" value="1"/>
</dbReference>
<dbReference type="Pfam" id="PF00447">
    <property type="entry name" value="HSF_DNA-bind"/>
    <property type="match status" value="1"/>
</dbReference>
<dbReference type="PRINTS" id="PR00056">
    <property type="entry name" value="HSFDOMAIN"/>
</dbReference>
<dbReference type="SMART" id="SM00415">
    <property type="entry name" value="HSF"/>
    <property type="match status" value="1"/>
</dbReference>
<dbReference type="SUPFAM" id="SSF46785">
    <property type="entry name" value="Winged helix' DNA-binding domain"/>
    <property type="match status" value="1"/>
</dbReference>
<dbReference type="PROSITE" id="PS00434">
    <property type="entry name" value="HSF_DOMAIN"/>
    <property type="match status" value="1"/>
</dbReference>
<gene>
    <name type="primary">HSF24</name>
</gene>
<feature type="chain" id="PRO_0000124589" description="Heat shock factor protein HSF24">
    <location>
        <begin position="1"/>
        <end position="301"/>
    </location>
</feature>
<feature type="DNA-binding region" evidence="1">
    <location>
        <begin position="7"/>
        <end position="101"/>
    </location>
</feature>
<feature type="region of interest" description="Disordered" evidence="2">
    <location>
        <begin position="103"/>
        <end position="160"/>
    </location>
</feature>
<feature type="region of interest" description="Disordered" evidence="2">
    <location>
        <begin position="221"/>
        <end position="244"/>
    </location>
</feature>
<feature type="compositionally biased region" description="Low complexity" evidence="2">
    <location>
        <begin position="107"/>
        <end position="142"/>
    </location>
</feature>
<feature type="compositionally biased region" description="Acidic residues" evidence="2">
    <location>
        <begin position="233"/>
        <end position="243"/>
    </location>
</feature>
<protein>
    <recommendedName>
        <fullName>Heat shock factor protein HSF24</fullName>
    </recommendedName>
    <alternativeName>
        <fullName>Heat shock transcription factor 24</fullName>
        <shortName>HSTF 24</shortName>
    </alternativeName>
    <alternativeName>
        <fullName>Heat stress transcription factor</fullName>
    </alternativeName>
</protein>
<accession>P22335</accession>
<sequence>MSQRTAPAPFLLKTYQLVDDAATDDVISWNEIGTTFVVWKTAEFAKDLLPKYFKHNNFSSFVRQLNTYGFRKIVPDKWEFANENFKRGQKELLTAIRRRKTVTSTPAGGKSVAAGASASPDNSGDDIGSSSTSSPDSKNPGSVDTPGKLSQFTDLSDENEKLKKDNQMLSSELVQAKKQCNELVAFLSQYVKVAPDMINRIMSQGTPSGSSLEELVKEVGGVKDLEEQGSYNDNDDKEDDDEKGDTLKLFGVLLKEKKKKRGPDENIETCGGRGKMMKTVDYNGPWMKMSSPAGESSKVCN</sequence>
<comment type="function">
    <text>DNA-binding protein that specifically binds heat shock promoter elements (HSE) and activates transcription.</text>
</comment>
<comment type="subunit">
    <text>Homotrimer.</text>
</comment>
<comment type="subcellular location">
    <subcellularLocation>
        <location>Nucleus</location>
    </subcellularLocation>
</comment>
<comment type="PTM">
    <text evidence="1">Exhibits temperature-dependent phosphorylation.</text>
</comment>
<comment type="similarity">
    <text evidence="3">Belongs to the HSF family.</text>
</comment>